<protein>
    <recommendedName>
        <fullName evidence="1">Protein sey1</fullName>
        <ecNumber evidence="1">3.6.5.-</ecNumber>
    </recommendedName>
</protein>
<organism>
    <name type="scientific">Sclerotinia sclerotiorum (strain ATCC 18683 / 1980 / Ss-1)</name>
    <name type="common">White mold</name>
    <name type="synonym">Whetzelinia sclerotiorum</name>
    <dbReference type="NCBI Taxonomy" id="665079"/>
    <lineage>
        <taxon>Eukaryota</taxon>
        <taxon>Fungi</taxon>
        <taxon>Dikarya</taxon>
        <taxon>Ascomycota</taxon>
        <taxon>Pezizomycotina</taxon>
        <taxon>Leotiomycetes</taxon>
        <taxon>Helotiales</taxon>
        <taxon>Sclerotiniaceae</taxon>
        <taxon>Sclerotinia</taxon>
    </lineage>
</organism>
<accession>A7ERA6</accession>
<sequence length="888" mass="99696">MDMATSNINGHGDRPSPAARFPTAPSVMTMNGNFASVGDAPTKEQYEHGIQVIDEQKEFNPNLNEYLQYTDTAHSGFNYHLISVFGSQSTGKSTLLNHLFGTQFGVMSERERRQTTKGIWMSKNKNQSSGASESETMADNILVMDVEGTDGRERGEDQDFERKSALFALATSEVLIVNIWEHQVGLYQGANMGLLKTVFEVNCQLFLKDKQSTPRSLLFFVIRDHLGTTPLANLKETLIQDLSAIWTSLSKPAGLENSKIEDYFDFAFAALPHKILQPDKFITEVQKLGTRFRAGRKSARAEDAGFEGGVFLPEYHRRIPADGFAVYTEGVWDQIVNNKDLDLPTQQELLAQFRCDEISREVLISFDAKIHPLEEKQGEDVRSGKPTVIADLGVTGKTARTSTIKHFETQASRYHKAVYTLKRTELEGKIDTRLKLLFHGQLLAAHKSGVASFSDAVSTAVKNGQKRAASYEFADIVEREKEVALKTFEAEMKSLYIEELSWTNFSSSYDLFEKDLNEVSGNLRKEEMRRLATHVERWVRSRLNDSIGVEFNKLGSGRGGSGAPETGEKPATEKDLWDRIWKTFTGTVKEAESKFIERAKSFDASEDEIEIGLWRLRRKSWGVLRAKIDEEVMEGNILLKLRENFEDKFRYDEAGVPRIWRPSDDIEGIYTKARESTLTLIPLLAKFKLLETSSPPELPEWIGNTPASVDPKDEEDLTPIGGVDEEEGKSLEEEMTVLSEAKRQDLVVRFKKTADGVYVEAKRSAIGGVAQVPLYFYGLLLALGWNEIVAVLRNPIYFVFLILCGVAGYVTYTLNLWGPIIRMLNAASTQGVEIGKEKLREFLKDSEVGRQALGMQGRDAGDSDAISLNTLDSRGKRVVREDEDVDEI</sequence>
<evidence type="ECO:0000255" key="1">
    <source>
        <dbReference type="HAMAP-Rule" id="MF_03109"/>
    </source>
</evidence>
<evidence type="ECO:0000255" key="2">
    <source>
        <dbReference type="PROSITE-ProRule" id="PRU01052"/>
    </source>
</evidence>
<evidence type="ECO:0000256" key="3">
    <source>
        <dbReference type="SAM" id="MobiDB-lite"/>
    </source>
</evidence>
<reference key="1">
    <citation type="journal article" date="2011" name="PLoS Genet.">
        <title>Genomic analysis of the necrotrophic fungal pathogens Sclerotinia sclerotiorum and Botrytis cinerea.</title>
        <authorList>
            <person name="Amselem J."/>
            <person name="Cuomo C.A."/>
            <person name="van Kan J.A.L."/>
            <person name="Viaud M."/>
            <person name="Benito E.P."/>
            <person name="Couloux A."/>
            <person name="Coutinho P.M."/>
            <person name="de Vries R.P."/>
            <person name="Dyer P.S."/>
            <person name="Fillinger S."/>
            <person name="Fournier E."/>
            <person name="Gout L."/>
            <person name="Hahn M."/>
            <person name="Kohn L."/>
            <person name="Lapalu N."/>
            <person name="Plummer K.M."/>
            <person name="Pradier J.-M."/>
            <person name="Quevillon E."/>
            <person name="Sharon A."/>
            <person name="Simon A."/>
            <person name="ten Have A."/>
            <person name="Tudzynski B."/>
            <person name="Tudzynski P."/>
            <person name="Wincker P."/>
            <person name="Andrew M."/>
            <person name="Anthouard V."/>
            <person name="Beever R.E."/>
            <person name="Beffa R."/>
            <person name="Benoit I."/>
            <person name="Bouzid O."/>
            <person name="Brault B."/>
            <person name="Chen Z."/>
            <person name="Choquer M."/>
            <person name="Collemare J."/>
            <person name="Cotton P."/>
            <person name="Danchin E.G."/>
            <person name="Da Silva C."/>
            <person name="Gautier A."/>
            <person name="Giraud C."/>
            <person name="Giraud T."/>
            <person name="Gonzalez C."/>
            <person name="Grossetete S."/>
            <person name="Gueldener U."/>
            <person name="Henrissat B."/>
            <person name="Howlett B.J."/>
            <person name="Kodira C."/>
            <person name="Kretschmer M."/>
            <person name="Lappartient A."/>
            <person name="Leroch M."/>
            <person name="Levis C."/>
            <person name="Mauceli E."/>
            <person name="Neuveglise C."/>
            <person name="Oeser B."/>
            <person name="Pearson M."/>
            <person name="Poulain J."/>
            <person name="Poussereau N."/>
            <person name="Quesneville H."/>
            <person name="Rascle C."/>
            <person name="Schumacher J."/>
            <person name="Segurens B."/>
            <person name="Sexton A."/>
            <person name="Silva E."/>
            <person name="Sirven C."/>
            <person name="Soanes D.M."/>
            <person name="Talbot N.J."/>
            <person name="Templeton M."/>
            <person name="Yandava C."/>
            <person name="Yarden O."/>
            <person name="Zeng Q."/>
            <person name="Rollins J.A."/>
            <person name="Lebrun M.-H."/>
            <person name="Dickman M."/>
        </authorList>
    </citation>
    <scope>NUCLEOTIDE SEQUENCE [LARGE SCALE GENOMIC DNA]</scope>
    <source>
        <strain>ATCC 18683 / 1980 / Ss-1</strain>
    </source>
</reference>
<comment type="function">
    <text evidence="1">Cooperates with the reticulon proteins and tubule-shaping DP1 family proteins to generate and maintain the structure of the tubular endoplasmic reticulum network. Has GTPase activity, which is required for its function in ER organization.</text>
</comment>
<comment type="subcellular location">
    <subcellularLocation>
        <location evidence="1">Endoplasmic reticulum membrane</location>
        <topology evidence="1">Multi-pass membrane protein</topology>
    </subcellularLocation>
    <text evidence="1">Enriched in the cortical ER. Concentrated in punctae along the ER tubules.</text>
</comment>
<comment type="similarity">
    <text evidence="2">Belongs to the TRAFAC class dynamin-like GTPase superfamily. GB1/RHD3 GTPase family. RHD3 subfamily.</text>
</comment>
<feature type="chain" id="PRO_0000385001" description="Protein sey1">
    <location>
        <begin position="1"/>
        <end position="888"/>
    </location>
</feature>
<feature type="topological domain" description="Cytoplasmic" evidence="1">
    <location>
        <begin position="1"/>
        <end position="771"/>
    </location>
</feature>
<feature type="transmembrane region" description="Helical" evidence="1">
    <location>
        <begin position="772"/>
        <end position="792"/>
    </location>
</feature>
<feature type="topological domain" description="Lumenal" evidence="1">
    <location>
        <begin position="793"/>
        <end position="795"/>
    </location>
</feature>
<feature type="transmembrane region" description="Helical" evidence="1">
    <location>
        <begin position="796"/>
        <end position="816"/>
    </location>
</feature>
<feature type="topological domain" description="Cytoplasmic" evidence="1">
    <location>
        <begin position="817"/>
        <end position="888"/>
    </location>
</feature>
<feature type="domain" description="GB1/RHD3-type G" evidence="2">
    <location>
        <begin position="76"/>
        <end position="315"/>
    </location>
</feature>
<feature type="region of interest" description="Disordered" evidence="3">
    <location>
        <begin position="1"/>
        <end position="24"/>
    </location>
</feature>
<feature type="region of interest" description="Disordered" evidence="3">
    <location>
        <begin position="703"/>
        <end position="723"/>
    </location>
</feature>
<feature type="coiled-coil region" evidence="1">
    <location>
        <begin position="724"/>
        <end position="745"/>
    </location>
</feature>
<feature type="compositionally biased region" description="Acidic residues" evidence="3">
    <location>
        <begin position="712"/>
        <end position="723"/>
    </location>
</feature>
<feature type="binding site" evidence="1">
    <location>
        <begin position="86"/>
        <end position="93"/>
    </location>
    <ligand>
        <name>GTP</name>
        <dbReference type="ChEBI" id="CHEBI:37565"/>
    </ligand>
</feature>
<keyword id="KW-0175">Coiled coil</keyword>
<keyword id="KW-0256">Endoplasmic reticulum</keyword>
<keyword id="KW-0342">GTP-binding</keyword>
<keyword id="KW-0378">Hydrolase</keyword>
<keyword id="KW-0472">Membrane</keyword>
<keyword id="KW-0547">Nucleotide-binding</keyword>
<keyword id="KW-1185">Reference proteome</keyword>
<keyword id="KW-0812">Transmembrane</keyword>
<keyword id="KW-1133">Transmembrane helix</keyword>
<proteinExistence type="inferred from homology"/>
<dbReference type="EC" id="3.6.5.-" evidence="1"/>
<dbReference type="EMBL" id="CH476630">
    <property type="protein sequence ID" value="EDN91998.1"/>
    <property type="molecule type" value="Genomic_DNA"/>
</dbReference>
<dbReference type="RefSeq" id="XP_001591234.1">
    <property type="nucleotide sequence ID" value="XM_001591184.1"/>
</dbReference>
<dbReference type="SMR" id="A7ERA6"/>
<dbReference type="FunCoup" id="A7ERA6">
    <property type="interactions" value="65"/>
</dbReference>
<dbReference type="STRING" id="665079.A7ERA6"/>
<dbReference type="GeneID" id="5487333"/>
<dbReference type="KEGG" id="ssl:SS1G_07860"/>
<dbReference type="VEuPathDB" id="FungiDB:sscle_11g082800"/>
<dbReference type="InParanoid" id="A7ERA6"/>
<dbReference type="OMA" id="PIIKMTE"/>
<dbReference type="OrthoDB" id="1597724at2759"/>
<dbReference type="Proteomes" id="UP000001312">
    <property type="component" value="Unassembled WGS sequence"/>
</dbReference>
<dbReference type="GO" id="GO:0005783">
    <property type="term" value="C:endoplasmic reticulum"/>
    <property type="evidence" value="ECO:0000318"/>
    <property type="project" value="GO_Central"/>
</dbReference>
<dbReference type="GO" id="GO:0005789">
    <property type="term" value="C:endoplasmic reticulum membrane"/>
    <property type="evidence" value="ECO:0007669"/>
    <property type="project" value="UniProtKB-SubCell"/>
</dbReference>
<dbReference type="GO" id="GO:0005525">
    <property type="term" value="F:GTP binding"/>
    <property type="evidence" value="ECO:0007669"/>
    <property type="project" value="UniProtKB-UniRule"/>
</dbReference>
<dbReference type="GO" id="GO:0003924">
    <property type="term" value="F:GTPase activity"/>
    <property type="evidence" value="ECO:0000318"/>
    <property type="project" value="GO_Central"/>
</dbReference>
<dbReference type="GO" id="GO:0016320">
    <property type="term" value="P:endoplasmic reticulum membrane fusion"/>
    <property type="evidence" value="ECO:0000318"/>
    <property type="project" value="GO_Central"/>
</dbReference>
<dbReference type="CDD" id="cd01851">
    <property type="entry name" value="GBP"/>
    <property type="match status" value="1"/>
</dbReference>
<dbReference type="FunFam" id="3.40.50.300:FF:000727">
    <property type="entry name" value="Protein SEY1 homolog"/>
    <property type="match status" value="1"/>
</dbReference>
<dbReference type="Gene3D" id="3.40.50.300">
    <property type="entry name" value="P-loop containing nucleotide triphosphate hydrolases"/>
    <property type="match status" value="1"/>
</dbReference>
<dbReference type="HAMAP" id="MF_03109">
    <property type="entry name" value="Sey1"/>
    <property type="match status" value="1"/>
</dbReference>
<dbReference type="InterPro" id="IPR030386">
    <property type="entry name" value="G_GB1_RHD3_dom"/>
</dbReference>
<dbReference type="InterPro" id="IPR027417">
    <property type="entry name" value="P-loop_NTPase"/>
</dbReference>
<dbReference type="InterPro" id="IPR008803">
    <property type="entry name" value="RHD3/Sey1"/>
</dbReference>
<dbReference type="InterPro" id="IPR046758">
    <property type="entry name" value="Sey1/RHD3-like_3HB"/>
</dbReference>
<dbReference type="PANTHER" id="PTHR45923">
    <property type="entry name" value="PROTEIN SEY1"/>
    <property type="match status" value="1"/>
</dbReference>
<dbReference type="PANTHER" id="PTHR45923:SF2">
    <property type="entry name" value="PROTEIN SEY1"/>
    <property type="match status" value="1"/>
</dbReference>
<dbReference type="Pfam" id="PF05879">
    <property type="entry name" value="RHD3_GTPase"/>
    <property type="match status" value="1"/>
</dbReference>
<dbReference type="Pfam" id="PF20428">
    <property type="entry name" value="Sey1_3HB"/>
    <property type="match status" value="1"/>
</dbReference>
<dbReference type="SUPFAM" id="SSF52540">
    <property type="entry name" value="P-loop containing nucleoside triphosphate hydrolases"/>
    <property type="match status" value="1"/>
</dbReference>
<dbReference type="PROSITE" id="PS51715">
    <property type="entry name" value="G_GB1_RHD3"/>
    <property type="match status" value="1"/>
</dbReference>
<name>SEY1_SCLS1</name>
<gene>
    <name type="primary">sey1</name>
    <name type="ORF">SS1G_07860</name>
</gene>